<keyword id="KW-0997">Cell inner membrane</keyword>
<keyword id="KW-1003">Cell membrane</keyword>
<keyword id="KW-0169">Cobalamin biosynthesis</keyword>
<keyword id="KW-0460">Magnesium</keyword>
<keyword id="KW-0472">Membrane</keyword>
<keyword id="KW-0808">Transferase</keyword>
<keyword id="KW-0812">Transmembrane</keyword>
<keyword id="KW-1133">Transmembrane helix</keyword>
<name>COBS_ECO81</name>
<accession>B7MWP9</accession>
<protein>
    <recommendedName>
        <fullName evidence="1">Adenosylcobinamide-GDP ribazoletransferase</fullName>
        <ecNumber evidence="1">2.7.8.26</ecNumber>
    </recommendedName>
    <alternativeName>
        <fullName evidence="1">Cobalamin synthase</fullName>
    </alternativeName>
    <alternativeName>
        <fullName evidence="1">Cobalamin-5'-phosphate synthase</fullName>
    </alternativeName>
</protein>
<feature type="chain" id="PRO_1000148023" description="Adenosylcobinamide-GDP ribazoletransferase">
    <location>
        <begin position="1"/>
        <end position="247"/>
    </location>
</feature>
<feature type="transmembrane region" description="Helical" evidence="1">
    <location>
        <begin position="34"/>
        <end position="54"/>
    </location>
</feature>
<feature type="transmembrane region" description="Helical" evidence="1">
    <location>
        <begin position="59"/>
        <end position="79"/>
    </location>
</feature>
<feature type="transmembrane region" description="Helical" evidence="1">
    <location>
        <begin position="113"/>
        <end position="133"/>
    </location>
</feature>
<feature type="transmembrane region" description="Helical" evidence="1">
    <location>
        <begin position="138"/>
        <end position="158"/>
    </location>
</feature>
<feature type="transmembrane region" description="Helical" evidence="1">
    <location>
        <begin position="194"/>
        <end position="214"/>
    </location>
</feature>
<gene>
    <name evidence="1" type="primary">cobS</name>
    <name type="ordered locus">ECED1_2328</name>
</gene>
<dbReference type="EC" id="2.7.8.26" evidence="1"/>
<dbReference type="EMBL" id="CU928162">
    <property type="protein sequence ID" value="CAR08515.2"/>
    <property type="molecule type" value="Genomic_DNA"/>
</dbReference>
<dbReference type="RefSeq" id="WP_001326708.1">
    <property type="nucleotide sequence ID" value="NC_011745.1"/>
</dbReference>
<dbReference type="KEGG" id="ecq:ECED1_2328"/>
<dbReference type="HOGENOM" id="CLU_057426_1_1_6"/>
<dbReference type="UniPathway" id="UPA00148">
    <property type="reaction ID" value="UER00238"/>
</dbReference>
<dbReference type="Proteomes" id="UP000000748">
    <property type="component" value="Chromosome"/>
</dbReference>
<dbReference type="GO" id="GO:0005886">
    <property type="term" value="C:plasma membrane"/>
    <property type="evidence" value="ECO:0007669"/>
    <property type="project" value="UniProtKB-SubCell"/>
</dbReference>
<dbReference type="GO" id="GO:0051073">
    <property type="term" value="F:adenosylcobinamide-GDP ribazoletransferase activity"/>
    <property type="evidence" value="ECO:0007669"/>
    <property type="project" value="UniProtKB-UniRule"/>
</dbReference>
<dbReference type="GO" id="GO:0008818">
    <property type="term" value="F:cobalamin 5'-phosphate synthase activity"/>
    <property type="evidence" value="ECO:0007669"/>
    <property type="project" value="UniProtKB-UniRule"/>
</dbReference>
<dbReference type="GO" id="GO:0009236">
    <property type="term" value="P:cobalamin biosynthetic process"/>
    <property type="evidence" value="ECO:0007669"/>
    <property type="project" value="UniProtKB-UniRule"/>
</dbReference>
<dbReference type="HAMAP" id="MF_00719">
    <property type="entry name" value="CobS"/>
    <property type="match status" value="1"/>
</dbReference>
<dbReference type="InterPro" id="IPR003805">
    <property type="entry name" value="CobS"/>
</dbReference>
<dbReference type="NCBIfam" id="TIGR00317">
    <property type="entry name" value="cobS"/>
    <property type="match status" value="1"/>
</dbReference>
<dbReference type="PANTHER" id="PTHR34148">
    <property type="entry name" value="ADENOSYLCOBINAMIDE-GDP RIBAZOLETRANSFERASE"/>
    <property type="match status" value="1"/>
</dbReference>
<dbReference type="PANTHER" id="PTHR34148:SF1">
    <property type="entry name" value="ADENOSYLCOBINAMIDE-GDP RIBAZOLETRANSFERASE"/>
    <property type="match status" value="1"/>
</dbReference>
<dbReference type="Pfam" id="PF02654">
    <property type="entry name" value="CobS"/>
    <property type="match status" value="1"/>
</dbReference>
<reference key="1">
    <citation type="journal article" date="2009" name="PLoS Genet.">
        <title>Organised genome dynamics in the Escherichia coli species results in highly diverse adaptive paths.</title>
        <authorList>
            <person name="Touchon M."/>
            <person name="Hoede C."/>
            <person name="Tenaillon O."/>
            <person name="Barbe V."/>
            <person name="Baeriswyl S."/>
            <person name="Bidet P."/>
            <person name="Bingen E."/>
            <person name="Bonacorsi S."/>
            <person name="Bouchier C."/>
            <person name="Bouvet O."/>
            <person name="Calteau A."/>
            <person name="Chiapello H."/>
            <person name="Clermont O."/>
            <person name="Cruveiller S."/>
            <person name="Danchin A."/>
            <person name="Diard M."/>
            <person name="Dossat C."/>
            <person name="Karoui M.E."/>
            <person name="Frapy E."/>
            <person name="Garry L."/>
            <person name="Ghigo J.M."/>
            <person name="Gilles A.M."/>
            <person name="Johnson J."/>
            <person name="Le Bouguenec C."/>
            <person name="Lescat M."/>
            <person name="Mangenot S."/>
            <person name="Martinez-Jehanne V."/>
            <person name="Matic I."/>
            <person name="Nassif X."/>
            <person name="Oztas S."/>
            <person name="Petit M.A."/>
            <person name="Pichon C."/>
            <person name="Rouy Z."/>
            <person name="Ruf C.S."/>
            <person name="Schneider D."/>
            <person name="Tourret J."/>
            <person name="Vacherie B."/>
            <person name="Vallenet D."/>
            <person name="Medigue C."/>
            <person name="Rocha E.P.C."/>
            <person name="Denamur E."/>
        </authorList>
    </citation>
    <scope>NUCLEOTIDE SEQUENCE [LARGE SCALE GENOMIC DNA]</scope>
    <source>
        <strain>ED1a</strain>
    </source>
</reference>
<sequence>MSKLFWAMLSFITRLPVPRRWSQGLDFEHYSRGIITFPLIGLLLGAISGLVFMVLQAWCGAPLAALFSVLVLVLMTGGFHLDGLADTCDGVFSARSRDRMLEIMRDSRLGTHGGLALIFVVLAKILVLSELALRGESILASLAAACAVSRGTAALLMYRHRYAREEGLGNVFIGKIDGRQTCVTLGLAAIFAAVLLPGMHGVAAMVVTMVAIFILGQLLKRTLGGQTGDTLGAAIELGELVFLLALL</sequence>
<organism>
    <name type="scientific">Escherichia coli O81 (strain ED1a)</name>
    <dbReference type="NCBI Taxonomy" id="585397"/>
    <lineage>
        <taxon>Bacteria</taxon>
        <taxon>Pseudomonadati</taxon>
        <taxon>Pseudomonadota</taxon>
        <taxon>Gammaproteobacteria</taxon>
        <taxon>Enterobacterales</taxon>
        <taxon>Enterobacteriaceae</taxon>
        <taxon>Escherichia</taxon>
    </lineage>
</organism>
<comment type="function">
    <text evidence="1">Joins adenosylcobinamide-GDP and alpha-ribazole to generate adenosylcobalamin (Ado-cobalamin). Also synthesizes adenosylcobalamin 5'-phosphate from adenosylcobinamide-GDP and alpha-ribazole 5'-phosphate.</text>
</comment>
<comment type="catalytic activity">
    <reaction evidence="1">
        <text>alpha-ribazole + adenosylcob(III)inamide-GDP = adenosylcob(III)alamin + GMP + H(+)</text>
        <dbReference type="Rhea" id="RHEA:16049"/>
        <dbReference type="ChEBI" id="CHEBI:10329"/>
        <dbReference type="ChEBI" id="CHEBI:15378"/>
        <dbReference type="ChEBI" id="CHEBI:18408"/>
        <dbReference type="ChEBI" id="CHEBI:58115"/>
        <dbReference type="ChEBI" id="CHEBI:60487"/>
        <dbReference type="EC" id="2.7.8.26"/>
    </reaction>
</comment>
<comment type="catalytic activity">
    <reaction evidence="1">
        <text>alpha-ribazole 5'-phosphate + adenosylcob(III)inamide-GDP = adenosylcob(III)alamin 5'-phosphate + GMP + H(+)</text>
        <dbReference type="Rhea" id="RHEA:23560"/>
        <dbReference type="ChEBI" id="CHEBI:15378"/>
        <dbReference type="ChEBI" id="CHEBI:57918"/>
        <dbReference type="ChEBI" id="CHEBI:58115"/>
        <dbReference type="ChEBI" id="CHEBI:60487"/>
        <dbReference type="ChEBI" id="CHEBI:60493"/>
        <dbReference type="EC" id="2.7.8.26"/>
    </reaction>
</comment>
<comment type="cofactor">
    <cofactor evidence="1">
        <name>Mg(2+)</name>
        <dbReference type="ChEBI" id="CHEBI:18420"/>
    </cofactor>
</comment>
<comment type="pathway">
    <text evidence="1">Cofactor biosynthesis; adenosylcobalamin biosynthesis; adenosylcobalamin from cob(II)yrinate a,c-diamide: step 7/7.</text>
</comment>
<comment type="subcellular location">
    <subcellularLocation>
        <location evidence="1">Cell inner membrane</location>
        <topology evidence="1">Multi-pass membrane protein</topology>
    </subcellularLocation>
</comment>
<comment type="similarity">
    <text evidence="1">Belongs to the CobS family.</text>
</comment>
<evidence type="ECO:0000255" key="1">
    <source>
        <dbReference type="HAMAP-Rule" id="MF_00719"/>
    </source>
</evidence>
<proteinExistence type="inferred from homology"/>